<dbReference type="EC" id="2.7.1.130" evidence="1"/>
<dbReference type="EMBL" id="CP000947">
    <property type="protein sequence ID" value="ACA32683.1"/>
    <property type="molecule type" value="Genomic_DNA"/>
</dbReference>
<dbReference type="RefSeq" id="WP_012341794.1">
    <property type="nucleotide sequence ID" value="NC_010519.1"/>
</dbReference>
<dbReference type="SMR" id="B0UT77"/>
<dbReference type="STRING" id="228400.HSM_0996"/>
<dbReference type="GeneID" id="31487294"/>
<dbReference type="KEGG" id="hsm:HSM_0996"/>
<dbReference type="HOGENOM" id="CLU_038816_2_0_6"/>
<dbReference type="UniPathway" id="UPA00359">
    <property type="reaction ID" value="UER00482"/>
</dbReference>
<dbReference type="GO" id="GO:0005886">
    <property type="term" value="C:plasma membrane"/>
    <property type="evidence" value="ECO:0007669"/>
    <property type="project" value="TreeGrafter"/>
</dbReference>
<dbReference type="GO" id="GO:0005524">
    <property type="term" value="F:ATP binding"/>
    <property type="evidence" value="ECO:0007669"/>
    <property type="project" value="UniProtKB-UniRule"/>
</dbReference>
<dbReference type="GO" id="GO:0009029">
    <property type="term" value="F:tetraacyldisaccharide 4'-kinase activity"/>
    <property type="evidence" value="ECO:0007669"/>
    <property type="project" value="UniProtKB-UniRule"/>
</dbReference>
<dbReference type="GO" id="GO:0009245">
    <property type="term" value="P:lipid A biosynthetic process"/>
    <property type="evidence" value="ECO:0007669"/>
    <property type="project" value="UniProtKB-UniRule"/>
</dbReference>
<dbReference type="GO" id="GO:0009244">
    <property type="term" value="P:lipopolysaccharide core region biosynthetic process"/>
    <property type="evidence" value="ECO:0007669"/>
    <property type="project" value="TreeGrafter"/>
</dbReference>
<dbReference type="HAMAP" id="MF_00409">
    <property type="entry name" value="LpxK"/>
    <property type="match status" value="1"/>
</dbReference>
<dbReference type="InterPro" id="IPR003758">
    <property type="entry name" value="LpxK"/>
</dbReference>
<dbReference type="InterPro" id="IPR027417">
    <property type="entry name" value="P-loop_NTPase"/>
</dbReference>
<dbReference type="NCBIfam" id="TIGR00682">
    <property type="entry name" value="lpxK"/>
    <property type="match status" value="1"/>
</dbReference>
<dbReference type="PANTHER" id="PTHR42724">
    <property type="entry name" value="TETRAACYLDISACCHARIDE 4'-KINASE"/>
    <property type="match status" value="1"/>
</dbReference>
<dbReference type="PANTHER" id="PTHR42724:SF1">
    <property type="entry name" value="TETRAACYLDISACCHARIDE 4'-KINASE, MITOCHONDRIAL-RELATED"/>
    <property type="match status" value="1"/>
</dbReference>
<dbReference type="Pfam" id="PF02606">
    <property type="entry name" value="LpxK"/>
    <property type="match status" value="1"/>
</dbReference>
<dbReference type="SUPFAM" id="SSF52540">
    <property type="entry name" value="P-loop containing nucleoside triphosphate hydrolases"/>
    <property type="match status" value="1"/>
</dbReference>
<protein>
    <recommendedName>
        <fullName evidence="1">Tetraacyldisaccharide 4'-kinase</fullName>
        <ecNumber evidence="1">2.7.1.130</ecNumber>
    </recommendedName>
    <alternativeName>
        <fullName evidence="1">Lipid A 4'-kinase</fullName>
    </alternativeName>
</protein>
<reference key="1">
    <citation type="submission" date="2008-02" db="EMBL/GenBank/DDBJ databases">
        <title>Complete sequence of Haemophilus somnus 2336.</title>
        <authorList>
            <consortium name="US DOE Joint Genome Institute"/>
            <person name="Siddaramappa S."/>
            <person name="Duncan A.J."/>
            <person name="Challacombe J.F."/>
            <person name="Rainey D."/>
            <person name="Gillaspy A.F."/>
            <person name="Carson M."/>
            <person name="Gipson J."/>
            <person name="Gipson M."/>
            <person name="Bruce D."/>
            <person name="Detter J.C."/>
            <person name="Han C.S."/>
            <person name="Land M."/>
            <person name="Tapia R."/>
            <person name="Thompson L.S."/>
            <person name="Orvis J."/>
            <person name="Zaitshik J."/>
            <person name="Barnes G."/>
            <person name="Brettin T.S."/>
            <person name="Dyer D.W."/>
            <person name="Inzana T.J."/>
        </authorList>
    </citation>
    <scope>NUCLEOTIDE SEQUENCE [LARGE SCALE GENOMIC DNA]</scope>
    <source>
        <strain>2336</strain>
    </source>
</reference>
<organism>
    <name type="scientific">Histophilus somni (strain 2336)</name>
    <name type="common">Haemophilus somnus</name>
    <dbReference type="NCBI Taxonomy" id="228400"/>
    <lineage>
        <taxon>Bacteria</taxon>
        <taxon>Pseudomonadati</taxon>
        <taxon>Pseudomonadota</taxon>
        <taxon>Gammaproteobacteria</taxon>
        <taxon>Pasteurellales</taxon>
        <taxon>Pasteurellaceae</taxon>
        <taxon>Histophilus</taxon>
    </lineage>
</organism>
<feature type="chain" id="PRO_1000123720" description="Tetraacyldisaccharide 4'-kinase">
    <location>
        <begin position="1"/>
        <end position="331"/>
    </location>
</feature>
<feature type="binding site" evidence="1">
    <location>
        <begin position="57"/>
        <end position="64"/>
    </location>
    <ligand>
        <name>ATP</name>
        <dbReference type="ChEBI" id="CHEBI:30616"/>
    </ligand>
</feature>
<comment type="function">
    <text evidence="1">Transfers the gamma-phosphate of ATP to the 4'-position of a tetraacyldisaccharide 1-phosphate intermediate (termed DS-1-P) to form tetraacyldisaccharide 1,4'-bis-phosphate (lipid IVA).</text>
</comment>
<comment type="catalytic activity">
    <reaction evidence="1">
        <text>a lipid A disaccharide + ATP = a lipid IVA + ADP + H(+)</text>
        <dbReference type="Rhea" id="RHEA:67840"/>
        <dbReference type="ChEBI" id="CHEBI:15378"/>
        <dbReference type="ChEBI" id="CHEBI:30616"/>
        <dbReference type="ChEBI" id="CHEBI:176343"/>
        <dbReference type="ChEBI" id="CHEBI:176425"/>
        <dbReference type="ChEBI" id="CHEBI:456216"/>
        <dbReference type="EC" id="2.7.1.130"/>
    </reaction>
</comment>
<comment type="pathway">
    <text evidence="1">Glycolipid biosynthesis; lipid IV(A) biosynthesis; lipid IV(A) from (3R)-3-hydroxytetradecanoyl-[acyl-carrier-protein] and UDP-N-acetyl-alpha-D-glucosamine: step 6/6.</text>
</comment>
<comment type="similarity">
    <text evidence="1">Belongs to the LpxK family.</text>
</comment>
<proteinExistence type="inferred from homology"/>
<gene>
    <name evidence="1" type="primary">lpxK</name>
    <name type="ordered locus">HSM_0996</name>
</gene>
<keyword id="KW-0067">ATP-binding</keyword>
<keyword id="KW-0418">Kinase</keyword>
<keyword id="KW-0441">Lipid A biosynthesis</keyword>
<keyword id="KW-0444">Lipid biosynthesis</keyword>
<keyword id="KW-0443">Lipid metabolism</keyword>
<keyword id="KW-0547">Nucleotide-binding</keyword>
<keyword id="KW-0808">Transferase</keyword>
<name>LPXK_HISS2</name>
<sequence>MFFWYQNHVIAKLLVWLLFPFSLVFWFISVIRRRLFRLNWLKSYRSPVPVLIVGNLSVGGNGKTPVTIWLVKQFQSRGIKVGVISRGYGSRAEYYPYLVKIDDNPTISGDEPLLIAQRTGVPVCISPNRQQAIELLLAQFNCDLIISDDGLQHYKLQRDFEIVVIDGERVFGNGFVMPAGPLRELPNRLAEVDLIINNGKLTGYSNTLMLLLPKFAVNLVSGEKKLLRDFQRIPLNAIAGIGYPQRFFNMLRDFALTLEKTQSFQDHQDFDAVHFSYFSSNQPLFMTEKDAVKCRPFAQANWWYVPVEADIQGEEVERFMQVVSQQIKEKK</sequence>
<evidence type="ECO:0000255" key="1">
    <source>
        <dbReference type="HAMAP-Rule" id="MF_00409"/>
    </source>
</evidence>
<accession>B0UT77</accession>